<organism>
    <name type="scientific">Colwellia psychrerythraea (strain 34H / ATCC BAA-681)</name>
    <name type="common">Vibrio psychroerythus</name>
    <dbReference type="NCBI Taxonomy" id="167879"/>
    <lineage>
        <taxon>Bacteria</taxon>
        <taxon>Pseudomonadati</taxon>
        <taxon>Pseudomonadota</taxon>
        <taxon>Gammaproteobacteria</taxon>
        <taxon>Alteromonadales</taxon>
        <taxon>Colwelliaceae</taxon>
        <taxon>Colwellia</taxon>
    </lineage>
</organism>
<reference key="1">
    <citation type="journal article" date="2005" name="Proc. Natl. Acad. Sci. U.S.A.">
        <title>The psychrophilic lifestyle as revealed by the genome sequence of Colwellia psychrerythraea 34H through genomic and proteomic analyses.</title>
        <authorList>
            <person name="Methe B.A."/>
            <person name="Nelson K.E."/>
            <person name="Deming J.W."/>
            <person name="Momen B."/>
            <person name="Melamud E."/>
            <person name="Zhang X."/>
            <person name="Moult J."/>
            <person name="Madupu R."/>
            <person name="Nelson W.C."/>
            <person name="Dodson R.J."/>
            <person name="Brinkac L.M."/>
            <person name="Daugherty S.C."/>
            <person name="Durkin A.S."/>
            <person name="DeBoy R.T."/>
            <person name="Kolonay J.F."/>
            <person name="Sullivan S.A."/>
            <person name="Zhou L."/>
            <person name="Davidsen T.M."/>
            <person name="Wu M."/>
            <person name="Huston A.L."/>
            <person name="Lewis M."/>
            <person name="Weaver B."/>
            <person name="Weidman J.F."/>
            <person name="Khouri H."/>
            <person name="Utterback T.R."/>
            <person name="Feldblyum T.V."/>
            <person name="Fraser C.M."/>
        </authorList>
    </citation>
    <scope>NUCLEOTIDE SEQUENCE [LARGE SCALE GENOMIC DNA]</scope>
    <source>
        <strain>34H / ATCC BAA-681</strain>
    </source>
</reference>
<feature type="chain" id="PRO_1000047747" description="Porphobilinogen deaminase">
    <location>
        <begin position="1"/>
        <end position="317"/>
    </location>
</feature>
<feature type="modified residue" description="S-(dipyrrolylmethanemethyl)cysteine" evidence="1">
    <location>
        <position position="242"/>
    </location>
</feature>
<evidence type="ECO:0000255" key="1">
    <source>
        <dbReference type="HAMAP-Rule" id="MF_00260"/>
    </source>
</evidence>
<accession>Q48AW8</accession>
<gene>
    <name evidence="1" type="primary">hemC</name>
    <name type="ordered locus">CPS_0074</name>
</gene>
<name>HEM3_COLP3</name>
<dbReference type="EC" id="2.5.1.61" evidence="1"/>
<dbReference type="EMBL" id="CP000083">
    <property type="protein sequence ID" value="AAZ24707.1"/>
    <property type="molecule type" value="Genomic_DNA"/>
</dbReference>
<dbReference type="RefSeq" id="WP_011040949.1">
    <property type="nucleotide sequence ID" value="NC_003910.7"/>
</dbReference>
<dbReference type="SMR" id="Q48AW8"/>
<dbReference type="STRING" id="167879.CPS_0074"/>
<dbReference type="KEGG" id="cps:CPS_0074"/>
<dbReference type="eggNOG" id="COG0181">
    <property type="taxonomic scope" value="Bacteria"/>
</dbReference>
<dbReference type="HOGENOM" id="CLU_019704_0_2_6"/>
<dbReference type="UniPathway" id="UPA00251">
    <property type="reaction ID" value="UER00319"/>
</dbReference>
<dbReference type="Proteomes" id="UP000000547">
    <property type="component" value="Chromosome"/>
</dbReference>
<dbReference type="GO" id="GO:0005737">
    <property type="term" value="C:cytoplasm"/>
    <property type="evidence" value="ECO:0007669"/>
    <property type="project" value="TreeGrafter"/>
</dbReference>
<dbReference type="GO" id="GO:0004418">
    <property type="term" value="F:hydroxymethylbilane synthase activity"/>
    <property type="evidence" value="ECO:0007669"/>
    <property type="project" value="UniProtKB-UniRule"/>
</dbReference>
<dbReference type="GO" id="GO:0006782">
    <property type="term" value="P:protoporphyrinogen IX biosynthetic process"/>
    <property type="evidence" value="ECO:0007669"/>
    <property type="project" value="UniProtKB-UniRule"/>
</dbReference>
<dbReference type="CDD" id="cd13646">
    <property type="entry name" value="PBP2_EcHMBS_like"/>
    <property type="match status" value="1"/>
</dbReference>
<dbReference type="FunFam" id="3.30.160.40:FF:000002">
    <property type="entry name" value="Porphobilinogen deaminase"/>
    <property type="match status" value="1"/>
</dbReference>
<dbReference type="FunFam" id="3.40.190.10:FF:000004">
    <property type="entry name" value="Porphobilinogen deaminase"/>
    <property type="match status" value="1"/>
</dbReference>
<dbReference type="FunFam" id="3.40.190.10:FF:000005">
    <property type="entry name" value="Porphobilinogen deaminase"/>
    <property type="match status" value="1"/>
</dbReference>
<dbReference type="Gene3D" id="3.40.190.10">
    <property type="entry name" value="Periplasmic binding protein-like II"/>
    <property type="match status" value="2"/>
</dbReference>
<dbReference type="Gene3D" id="3.30.160.40">
    <property type="entry name" value="Porphobilinogen deaminase, C-terminal domain"/>
    <property type="match status" value="1"/>
</dbReference>
<dbReference type="HAMAP" id="MF_00260">
    <property type="entry name" value="Porphobil_deam"/>
    <property type="match status" value="1"/>
</dbReference>
<dbReference type="InterPro" id="IPR000860">
    <property type="entry name" value="HemC"/>
</dbReference>
<dbReference type="InterPro" id="IPR022419">
    <property type="entry name" value="Porphobilin_deaminase_cofac_BS"/>
</dbReference>
<dbReference type="InterPro" id="IPR022417">
    <property type="entry name" value="Porphobilin_deaminase_N"/>
</dbReference>
<dbReference type="InterPro" id="IPR022418">
    <property type="entry name" value="Porphobilinogen_deaminase_C"/>
</dbReference>
<dbReference type="InterPro" id="IPR036803">
    <property type="entry name" value="Porphobilinogen_deaminase_C_sf"/>
</dbReference>
<dbReference type="NCBIfam" id="TIGR00212">
    <property type="entry name" value="hemC"/>
    <property type="match status" value="1"/>
</dbReference>
<dbReference type="PANTHER" id="PTHR11557">
    <property type="entry name" value="PORPHOBILINOGEN DEAMINASE"/>
    <property type="match status" value="1"/>
</dbReference>
<dbReference type="PANTHER" id="PTHR11557:SF0">
    <property type="entry name" value="PORPHOBILINOGEN DEAMINASE"/>
    <property type="match status" value="1"/>
</dbReference>
<dbReference type="Pfam" id="PF01379">
    <property type="entry name" value="Porphobil_deam"/>
    <property type="match status" value="1"/>
</dbReference>
<dbReference type="Pfam" id="PF03900">
    <property type="entry name" value="Porphobil_deamC"/>
    <property type="match status" value="1"/>
</dbReference>
<dbReference type="PIRSF" id="PIRSF001438">
    <property type="entry name" value="4pyrrol_synth_OHMeBilane_synth"/>
    <property type="match status" value="1"/>
</dbReference>
<dbReference type="PRINTS" id="PR00151">
    <property type="entry name" value="PORPHBDMNASE"/>
</dbReference>
<dbReference type="SUPFAM" id="SSF53850">
    <property type="entry name" value="Periplasmic binding protein-like II"/>
    <property type="match status" value="1"/>
</dbReference>
<dbReference type="SUPFAM" id="SSF54782">
    <property type="entry name" value="Porphobilinogen deaminase (hydroxymethylbilane synthase), C-terminal domain"/>
    <property type="match status" value="1"/>
</dbReference>
<dbReference type="PROSITE" id="PS00533">
    <property type="entry name" value="PORPHOBILINOGEN_DEAM"/>
    <property type="match status" value="1"/>
</dbReference>
<protein>
    <recommendedName>
        <fullName evidence="1">Porphobilinogen deaminase</fullName>
        <shortName evidence="1">PBG</shortName>
        <ecNumber evidence="1">2.5.1.61</ecNumber>
    </recommendedName>
    <alternativeName>
        <fullName evidence="1">Hydroxymethylbilane synthase</fullName>
        <shortName evidence="1">HMBS</shortName>
    </alternativeName>
    <alternativeName>
        <fullName evidence="1">Pre-uroporphyrinogen synthase</fullName>
    </alternativeName>
</protein>
<comment type="function">
    <text evidence="1">Tetrapolymerization of the monopyrrole PBG into the hydroxymethylbilane pre-uroporphyrinogen in several discrete steps.</text>
</comment>
<comment type="catalytic activity">
    <reaction evidence="1">
        <text>4 porphobilinogen + H2O = hydroxymethylbilane + 4 NH4(+)</text>
        <dbReference type="Rhea" id="RHEA:13185"/>
        <dbReference type="ChEBI" id="CHEBI:15377"/>
        <dbReference type="ChEBI" id="CHEBI:28938"/>
        <dbReference type="ChEBI" id="CHEBI:57845"/>
        <dbReference type="ChEBI" id="CHEBI:58126"/>
        <dbReference type="EC" id="2.5.1.61"/>
    </reaction>
</comment>
<comment type="cofactor">
    <cofactor evidence="1">
        <name>dipyrromethane</name>
        <dbReference type="ChEBI" id="CHEBI:60342"/>
    </cofactor>
    <text evidence="1">Binds 1 dipyrromethane group covalently.</text>
</comment>
<comment type="pathway">
    <text evidence="1">Porphyrin-containing compound metabolism; protoporphyrin-IX biosynthesis; coproporphyrinogen-III from 5-aminolevulinate: step 2/4.</text>
</comment>
<comment type="subunit">
    <text evidence="1">Monomer.</text>
</comment>
<comment type="miscellaneous">
    <text evidence="1">The porphobilinogen subunits are added to the dipyrromethane group.</text>
</comment>
<comment type="similarity">
    <text evidence="1">Belongs to the HMBS family.</text>
</comment>
<proteinExistence type="inferred from homology"/>
<keyword id="KW-0627">Porphyrin biosynthesis</keyword>
<keyword id="KW-0808">Transferase</keyword>
<sequence length="317" mass="34435">MNNTTVRIATRKSALALWQAEYVKAQLEHFHDGINVELVPMTTKGDIILDTPLAKVGGKGLFVKELEVAMLEDRADIAVHSMKDVPVDFPEGLGLEVICPREDPRDAFVSNTIKSLSDLPQGSIVGTSSLRRQCQLKASRPDLDIRDLRGNVNTRLRKLDEGQYDAIILAAAGLIRLEMSERIAQFIEPEEMLPANGQGAVGIECRNDDATIKALLAPLECATTRIRVLAERAMNRALQGGCQVPIGSYGVISADGKNIHLRGLVGSVDGSEMIESEITGPVEEGEALGNKLAQELLSRGADKILQQVYSENDIKNS</sequence>